<protein>
    <recommendedName>
        <fullName evidence="1">Aspartyl/glutamyl-tRNA(Asn/Gln) amidotransferase subunit C</fullName>
        <shortName evidence="1">Asp/Glu-ADT subunit C</shortName>
        <ecNumber evidence="1">6.3.5.-</ecNumber>
    </recommendedName>
</protein>
<accession>A5CX64</accession>
<proteinExistence type="inferred from homology"/>
<sequence>MSLSENQVSQIAHLACLSLNEAQLKDNTQNLNTITSLFEQLANIEIDGVEPMLHPLHMFQRLREDVVSEKEQLALFQSIAPKVRNGYYLVPTVIK</sequence>
<reference key="1">
    <citation type="journal article" date="2007" name="Curr. Biol.">
        <title>Reduced genome of the thioautotrophic intracellular symbiont in a deep-sea clam, Calyptogena okutanii.</title>
        <authorList>
            <person name="Kuwahara H."/>
            <person name="Yoshida T."/>
            <person name="Takaki Y."/>
            <person name="Shimamura S."/>
            <person name="Nishi S."/>
            <person name="Harada M."/>
            <person name="Matsuyama K."/>
            <person name="Takishita K."/>
            <person name="Kawato M."/>
            <person name="Uematsu K."/>
            <person name="Fujiwara Y."/>
            <person name="Sato T."/>
            <person name="Kato C."/>
            <person name="Kitagawa M."/>
            <person name="Kato I."/>
            <person name="Maruyama T."/>
        </authorList>
    </citation>
    <scope>NUCLEOTIDE SEQUENCE [LARGE SCALE GENOMIC DNA]</scope>
    <source>
        <strain>HA</strain>
    </source>
</reference>
<organism>
    <name type="scientific">Vesicomyosocius okutanii subsp. Calyptogena okutanii (strain HA)</name>
    <dbReference type="NCBI Taxonomy" id="412965"/>
    <lineage>
        <taxon>Bacteria</taxon>
        <taxon>Pseudomonadati</taxon>
        <taxon>Pseudomonadota</taxon>
        <taxon>Gammaproteobacteria</taxon>
        <taxon>Candidatus Pseudothioglobaceae</taxon>
        <taxon>Candidatus Vesicomyosocius</taxon>
    </lineage>
</organism>
<gene>
    <name evidence="1" type="primary">gatC</name>
    <name type="ordered locus">COSY_0325</name>
</gene>
<evidence type="ECO:0000255" key="1">
    <source>
        <dbReference type="HAMAP-Rule" id="MF_00122"/>
    </source>
</evidence>
<feature type="chain" id="PRO_1000016240" description="Aspartyl/glutamyl-tRNA(Asn/Gln) amidotransferase subunit C">
    <location>
        <begin position="1"/>
        <end position="95"/>
    </location>
</feature>
<keyword id="KW-0067">ATP-binding</keyword>
<keyword id="KW-0436">Ligase</keyword>
<keyword id="KW-0547">Nucleotide-binding</keyword>
<keyword id="KW-0648">Protein biosynthesis</keyword>
<keyword id="KW-1185">Reference proteome</keyword>
<comment type="function">
    <text evidence="1">Allows the formation of correctly charged Asn-tRNA(Asn) or Gln-tRNA(Gln) through the transamidation of misacylated Asp-tRNA(Asn) or Glu-tRNA(Gln) in organisms which lack either or both of asparaginyl-tRNA or glutaminyl-tRNA synthetases. The reaction takes place in the presence of glutamine and ATP through an activated phospho-Asp-tRNA(Asn) or phospho-Glu-tRNA(Gln).</text>
</comment>
<comment type="catalytic activity">
    <reaction evidence="1">
        <text>L-glutamyl-tRNA(Gln) + L-glutamine + ATP + H2O = L-glutaminyl-tRNA(Gln) + L-glutamate + ADP + phosphate + H(+)</text>
        <dbReference type="Rhea" id="RHEA:17521"/>
        <dbReference type="Rhea" id="RHEA-COMP:9681"/>
        <dbReference type="Rhea" id="RHEA-COMP:9684"/>
        <dbReference type="ChEBI" id="CHEBI:15377"/>
        <dbReference type="ChEBI" id="CHEBI:15378"/>
        <dbReference type="ChEBI" id="CHEBI:29985"/>
        <dbReference type="ChEBI" id="CHEBI:30616"/>
        <dbReference type="ChEBI" id="CHEBI:43474"/>
        <dbReference type="ChEBI" id="CHEBI:58359"/>
        <dbReference type="ChEBI" id="CHEBI:78520"/>
        <dbReference type="ChEBI" id="CHEBI:78521"/>
        <dbReference type="ChEBI" id="CHEBI:456216"/>
    </reaction>
</comment>
<comment type="catalytic activity">
    <reaction evidence="1">
        <text>L-aspartyl-tRNA(Asn) + L-glutamine + ATP + H2O = L-asparaginyl-tRNA(Asn) + L-glutamate + ADP + phosphate + 2 H(+)</text>
        <dbReference type="Rhea" id="RHEA:14513"/>
        <dbReference type="Rhea" id="RHEA-COMP:9674"/>
        <dbReference type="Rhea" id="RHEA-COMP:9677"/>
        <dbReference type="ChEBI" id="CHEBI:15377"/>
        <dbReference type="ChEBI" id="CHEBI:15378"/>
        <dbReference type="ChEBI" id="CHEBI:29985"/>
        <dbReference type="ChEBI" id="CHEBI:30616"/>
        <dbReference type="ChEBI" id="CHEBI:43474"/>
        <dbReference type="ChEBI" id="CHEBI:58359"/>
        <dbReference type="ChEBI" id="CHEBI:78515"/>
        <dbReference type="ChEBI" id="CHEBI:78516"/>
        <dbReference type="ChEBI" id="CHEBI:456216"/>
    </reaction>
</comment>
<comment type="subunit">
    <text evidence="1">Heterotrimer of A, B and C subunits.</text>
</comment>
<comment type="similarity">
    <text evidence="1">Belongs to the GatC family.</text>
</comment>
<name>GATC_VESOH</name>
<dbReference type="EC" id="6.3.5.-" evidence="1"/>
<dbReference type="EMBL" id="AP009247">
    <property type="protein sequence ID" value="BAF61450.1"/>
    <property type="molecule type" value="Genomic_DNA"/>
</dbReference>
<dbReference type="RefSeq" id="WP_011929720.1">
    <property type="nucleotide sequence ID" value="NC_009465.1"/>
</dbReference>
<dbReference type="SMR" id="A5CX64"/>
<dbReference type="STRING" id="412965.COSY_0325"/>
<dbReference type="KEGG" id="vok:COSY_0325"/>
<dbReference type="eggNOG" id="COG0721">
    <property type="taxonomic scope" value="Bacteria"/>
</dbReference>
<dbReference type="HOGENOM" id="CLU_105899_2_2_6"/>
<dbReference type="OrthoDB" id="9794326at2"/>
<dbReference type="Proteomes" id="UP000000247">
    <property type="component" value="Chromosome"/>
</dbReference>
<dbReference type="GO" id="GO:0050566">
    <property type="term" value="F:asparaginyl-tRNA synthase (glutamine-hydrolyzing) activity"/>
    <property type="evidence" value="ECO:0007669"/>
    <property type="project" value="RHEA"/>
</dbReference>
<dbReference type="GO" id="GO:0005524">
    <property type="term" value="F:ATP binding"/>
    <property type="evidence" value="ECO:0007669"/>
    <property type="project" value="UniProtKB-KW"/>
</dbReference>
<dbReference type="GO" id="GO:0050567">
    <property type="term" value="F:glutaminyl-tRNA synthase (glutamine-hydrolyzing) activity"/>
    <property type="evidence" value="ECO:0007669"/>
    <property type="project" value="UniProtKB-UniRule"/>
</dbReference>
<dbReference type="GO" id="GO:0070681">
    <property type="term" value="P:glutaminyl-tRNAGln biosynthesis via transamidation"/>
    <property type="evidence" value="ECO:0007669"/>
    <property type="project" value="TreeGrafter"/>
</dbReference>
<dbReference type="GO" id="GO:0006450">
    <property type="term" value="P:regulation of translational fidelity"/>
    <property type="evidence" value="ECO:0007669"/>
    <property type="project" value="InterPro"/>
</dbReference>
<dbReference type="GO" id="GO:0006412">
    <property type="term" value="P:translation"/>
    <property type="evidence" value="ECO:0007669"/>
    <property type="project" value="UniProtKB-UniRule"/>
</dbReference>
<dbReference type="Gene3D" id="1.10.20.60">
    <property type="entry name" value="Glu-tRNAGln amidotransferase C subunit, N-terminal domain"/>
    <property type="match status" value="1"/>
</dbReference>
<dbReference type="HAMAP" id="MF_00122">
    <property type="entry name" value="GatC"/>
    <property type="match status" value="1"/>
</dbReference>
<dbReference type="InterPro" id="IPR036113">
    <property type="entry name" value="Asp/Glu-ADT_sf_sub_c"/>
</dbReference>
<dbReference type="InterPro" id="IPR003837">
    <property type="entry name" value="GatC"/>
</dbReference>
<dbReference type="NCBIfam" id="TIGR00135">
    <property type="entry name" value="gatC"/>
    <property type="match status" value="1"/>
</dbReference>
<dbReference type="PANTHER" id="PTHR15004">
    <property type="entry name" value="GLUTAMYL-TRNA(GLN) AMIDOTRANSFERASE SUBUNIT C, MITOCHONDRIAL"/>
    <property type="match status" value="1"/>
</dbReference>
<dbReference type="PANTHER" id="PTHR15004:SF0">
    <property type="entry name" value="GLUTAMYL-TRNA(GLN) AMIDOTRANSFERASE SUBUNIT C, MITOCHONDRIAL"/>
    <property type="match status" value="1"/>
</dbReference>
<dbReference type="Pfam" id="PF02686">
    <property type="entry name" value="GatC"/>
    <property type="match status" value="1"/>
</dbReference>
<dbReference type="SUPFAM" id="SSF141000">
    <property type="entry name" value="Glu-tRNAGln amidotransferase C subunit"/>
    <property type="match status" value="1"/>
</dbReference>